<dbReference type="EMBL" id="M35027">
    <property type="protein sequence ID" value="AAA48187.1"/>
    <property type="molecule type" value="Genomic_DNA"/>
</dbReference>
<dbReference type="PIR" id="B42523">
    <property type="entry name" value="B42523"/>
</dbReference>
<dbReference type="Proteomes" id="UP000008269">
    <property type="component" value="Segment"/>
</dbReference>
<feature type="chain" id="PRO_0000099351" description="Protein A54">
    <location>
        <begin position="1"/>
        <end position="90"/>
    </location>
</feature>
<sequence>MTRWWRSRYICRSQCSNVKNSTCSQQILYIHLLILSYTTITKSFFKTLNHHQKSMFKVIRLKYIFEINSCISHPSILDLYVLKNTILLIL</sequence>
<name>VA54_VACCC</name>
<organismHost>
    <name type="scientific">Homo sapiens</name>
    <name type="common">Human</name>
    <dbReference type="NCBI Taxonomy" id="9606"/>
</organismHost>
<organism>
    <name type="scientific">Vaccinia virus (strain Copenhagen)</name>
    <name type="common">VACV</name>
    <dbReference type="NCBI Taxonomy" id="10249"/>
    <lineage>
        <taxon>Viruses</taxon>
        <taxon>Varidnaviria</taxon>
        <taxon>Bamfordvirae</taxon>
        <taxon>Nucleocytoviricota</taxon>
        <taxon>Pokkesviricetes</taxon>
        <taxon>Chitovirales</taxon>
        <taxon>Poxviridae</taxon>
        <taxon>Chordopoxvirinae</taxon>
        <taxon>Orthopoxvirus</taxon>
        <taxon>Vaccinia virus</taxon>
    </lineage>
</organism>
<accession>P68620</accession>
<accession>P21072</accession>
<accession>P24767</accession>
<keyword id="KW-1185">Reference proteome</keyword>
<reference key="1">
    <citation type="journal article" date="1990" name="Virology">
        <title>The complete DNA sequence of vaccinia virus.</title>
        <authorList>
            <person name="Goebel S.J."/>
            <person name="Johnson G.P."/>
            <person name="Perkus M.E."/>
            <person name="Davis S.W."/>
            <person name="Winslow J.P."/>
            <person name="Paoletti E."/>
        </authorList>
    </citation>
    <scope>NUCLEOTIDE SEQUENCE [LARGE SCALE GENOMIC DNA]</scope>
</reference>
<reference key="2">
    <citation type="journal article" date="1990" name="Virology">
        <title>Appendix to 'The complete DNA sequence of vaccinia virus'.</title>
        <authorList>
            <person name="Goebel S.J."/>
            <person name="Johnson G.P."/>
            <person name="Perkus M.E."/>
            <person name="Davis S.W."/>
            <person name="Winslow J.P."/>
            <person name="Paoletti E."/>
        </authorList>
    </citation>
    <scope>COMPLETE GENOME</scope>
</reference>
<protein>
    <recommendedName>
        <fullName>Protein A54</fullName>
    </recommendedName>
</protein>
<gene>
    <name type="ORF">A54L</name>
</gene>
<proteinExistence type="predicted"/>